<proteinExistence type="inferred from homology"/>
<dbReference type="EC" id="4.2.1.96" evidence="1"/>
<dbReference type="EMBL" id="CP000644">
    <property type="protein sequence ID" value="ABO90463.1"/>
    <property type="molecule type" value="Genomic_DNA"/>
</dbReference>
<dbReference type="RefSeq" id="WP_005310774.1">
    <property type="nucleotide sequence ID" value="NC_009348.1"/>
</dbReference>
<dbReference type="SMR" id="A4SNJ1"/>
<dbReference type="STRING" id="29491.GCA_000820065_01508"/>
<dbReference type="KEGG" id="asa:ASA_2419"/>
<dbReference type="eggNOG" id="COG2154">
    <property type="taxonomic scope" value="Bacteria"/>
</dbReference>
<dbReference type="HOGENOM" id="CLU_081974_2_2_6"/>
<dbReference type="Proteomes" id="UP000000225">
    <property type="component" value="Chromosome"/>
</dbReference>
<dbReference type="GO" id="GO:0008124">
    <property type="term" value="F:4-alpha-hydroxytetrahydrobiopterin dehydratase activity"/>
    <property type="evidence" value="ECO:0007669"/>
    <property type="project" value="UniProtKB-UniRule"/>
</dbReference>
<dbReference type="GO" id="GO:0006729">
    <property type="term" value="P:tetrahydrobiopterin biosynthetic process"/>
    <property type="evidence" value="ECO:0007669"/>
    <property type="project" value="InterPro"/>
</dbReference>
<dbReference type="CDD" id="cd00913">
    <property type="entry name" value="PCD_DCoH_subfamily_a"/>
    <property type="match status" value="1"/>
</dbReference>
<dbReference type="Gene3D" id="3.30.1360.20">
    <property type="entry name" value="Transcriptional coactivator/pterin dehydratase"/>
    <property type="match status" value="1"/>
</dbReference>
<dbReference type="HAMAP" id="MF_00434">
    <property type="entry name" value="Pterin_4_alpha"/>
    <property type="match status" value="1"/>
</dbReference>
<dbReference type="InterPro" id="IPR036428">
    <property type="entry name" value="PCD_sf"/>
</dbReference>
<dbReference type="InterPro" id="IPR050376">
    <property type="entry name" value="Pterin-4-alpha-carb_dehyd"/>
</dbReference>
<dbReference type="InterPro" id="IPR001533">
    <property type="entry name" value="Pterin_deHydtase"/>
</dbReference>
<dbReference type="NCBIfam" id="NF002016">
    <property type="entry name" value="PRK00823.1-1"/>
    <property type="match status" value="1"/>
</dbReference>
<dbReference type="PANTHER" id="PTHR42805">
    <property type="entry name" value="PTERIN-4-ALPHA-CARBINOLAMINE DEHYDRATASE-RELATED"/>
    <property type="match status" value="1"/>
</dbReference>
<dbReference type="PANTHER" id="PTHR42805:SF1">
    <property type="entry name" value="PTERIN-4-ALPHA-CARBINOLAMINE DEHYDRATASE-RELATED"/>
    <property type="match status" value="1"/>
</dbReference>
<dbReference type="Pfam" id="PF01329">
    <property type="entry name" value="Pterin_4a"/>
    <property type="match status" value="1"/>
</dbReference>
<dbReference type="SUPFAM" id="SSF55248">
    <property type="entry name" value="PCD-like"/>
    <property type="match status" value="1"/>
</dbReference>
<accession>A4SNJ1</accession>
<gene>
    <name type="ordered locus">ASA_2419</name>
</gene>
<evidence type="ECO:0000255" key="1">
    <source>
        <dbReference type="HAMAP-Rule" id="MF_00434"/>
    </source>
</evidence>
<reference key="1">
    <citation type="journal article" date="2008" name="BMC Genomics">
        <title>The genome of Aeromonas salmonicida subsp. salmonicida A449: insights into the evolution of a fish pathogen.</title>
        <authorList>
            <person name="Reith M.E."/>
            <person name="Singh R.K."/>
            <person name="Curtis B."/>
            <person name="Boyd J.M."/>
            <person name="Bouevitch A."/>
            <person name="Kimball J."/>
            <person name="Munholland J."/>
            <person name="Murphy C."/>
            <person name="Sarty D."/>
            <person name="Williams J."/>
            <person name="Nash J.H."/>
            <person name="Johnson S.C."/>
            <person name="Brown L.L."/>
        </authorList>
    </citation>
    <scope>NUCLEOTIDE SEQUENCE [LARGE SCALE GENOMIC DNA]</scope>
    <source>
        <strain>A449</strain>
    </source>
</reference>
<comment type="catalytic activity">
    <reaction evidence="1">
        <text>(4aS,6R)-4a-hydroxy-L-erythro-5,6,7,8-tetrahydrobiopterin = (6R)-L-erythro-6,7-dihydrobiopterin + H2O</text>
        <dbReference type="Rhea" id="RHEA:11920"/>
        <dbReference type="ChEBI" id="CHEBI:15377"/>
        <dbReference type="ChEBI" id="CHEBI:15642"/>
        <dbReference type="ChEBI" id="CHEBI:43120"/>
        <dbReference type="EC" id="4.2.1.96"/>
    </reaction>
</comment>
<comment type="similarity">
    <text evidence="1">Belongs to the pterin-4-alpha-carbinolamine dehydratase family.</text>
</comment>
<sequence length="117" mass="13494">MSELASQQCEACRADAPKVSEQELSELMHLIPDWQPLVVKGELQLRREFTFRNFKEALAFTNRLGELAEAEFHHPAILTEWGKVTVSWWTHKIGGLHRNDFIMAARTDQLLSDPLHK</sequence>
<feature type="chain" id="PRO_1000050404" description="Putative pterin-4-alpha-carbinolamine dehydratase">
    <location>
        <begin position="1"/>
        <end position="117"/>
    </location>
</feature>
<protein>
    <recommendedName>
        <fullName evidence="1">Putative pterin-4-alpha-carbinolamine dehydratase</fullName>
        <shortName evidence="1">PHS</shortName>
        <ecNumber evidence="1">4.2.1.96</ecNumber>
    </recommendedName>
    <alternativeName>
        <fullName evidence="1">4-alpha-hydroxy-tetrahydropterin dehydratase</fullName>
    </alternativeName>
    <alternativeName>
        <fullName evidence="1">Pterin carbinolamine dehydratase</fullName>
        <shortName evidence="1">PCD</shortName>
    </alternativeName>
</protein>
<keyword id="KW-0456">Lyase</keyword>
<name>PHS_AERS4</name>
<organism>
    <name type="scientific">Aeromonas salmonicida (strain A449)</name>
    <dbReference type="NCBI Taxonomy" id="382245"/>
    <lineage>
        <taxon>Bacteria</taxon>
        <taxon>Pseudomonadati</taxon>
        <taxon>Pseudomonadota</taxon>
        <taxon>Gammaproteobacteria</taxon>
        <taxon>Aeromonadales</taxon>
        <taxon>Aeromonadaceae</taxon>
        <taxon>Aeromonas</taxon>
    </lineage>
</organism>